<keyword id="KW-0030">Aminoacyl-tRNA synthetase</keyword>
<keyword id="KW-0067">ATP-binding</keyword>
<keyword id="KW-0963">Cytoplasm</keyword>
<keyword id="KW-0436">Ligase</keyword>
<keyword id="KW-0547">Nucleotide-binding</keyword>
<keyword id="KW-0648">Protein biosynthesis</keyword>
<proteinExistence type="inferred from homology"/>
<sequence>MGNYSTAIDKKWQEKWAESGLYKFDPNKEGEKLYVLEMFSYPSGSQLHAGHWFNYGPVDSWARFKRMQGYNVFQPMGFDAFGLPAENFAIKTGIHPQDSTIKNIAKMEEQLKAMGAMFNWENEVVTCSPEYYKWTQWLFLKLYEKGLAYRKKAPVNWCPSCQTVLANEQVVDGACERCSTEVTKKDLTQWFFKITDYADELLDKLDDLDWPEKTVSMQKHWIGRSTGSQVNFKVKDSDLNFDVFTTRVDTLCGVSYVVLAPENPLVDEIVSAEQKEAVENYKEEAKKQSDIERQSISREKTGVFTGAYAIHPLTGKEVPIWVGDYVLATYGTGAVMAVPAHDERDFAFAEKFNLPINRVIEAKDGSETNLPFCEHGILVNSGEFDGLTTDEAKEKIVEKLASMGLGEKKVNFRLRDWLVSRQRYWGAPIPVVYCEECGIVPVPESQLPVELPYDVEFAPDGKSPLAKSEAFVNTTCPHCGKPAKRETDTLDTFVCSSWYYLRYPDNKNTEAPFNPELINKMLPVDKYVGGPEHACMHLLYARFITKALRDMGYLNFDEPFTSLTHQGLILGPDGLKMSKSKGNTISPDDYIKEYGADVFRMYLMFGFAYTEGGAWSDDGIKSVNRFVERIERIIDTAREAISKGENNKTTMDKAEKELNYWRHNTIKSVTDDTDKLQFNTAIARMMEFINALSKYTQEKEMNLDFLKDVVSDYLRLLAPFAPHFSEEQWSLLGNSYSIFNEAWPKFDPKALVKDEVEIAIQVNGKIKNKIMVSSDLDEEGIKAAALADEKIIASTEGKTVVKVIVIKGRLVNIVVK</sequence>
<protein>
    <recommendedName>
        <fullName evidence="1">Leucine--tRNA ligase</fullName>
        <ecNumber evidence="1">6.1.1.4</ecNumber>
    </recommendedName>
    <alternativeName>
        <fullName evidence="1">Leucyl-tRNA synthetase</fullName>
        <shortName evidence="1">LeuRS</shortName>
    </alternativeName>
</protein>
<name>SYL_CLOP1</name>
<gene>
    <name evidence="1" type="primary">leuS</name>
    <name type="ordered locus">CPF_0657</name>
</gene>
<comment type="catalytic activity">
    <reaction evidence="1">
        <text>tRNA(Leu) + L-leucine + ATP = L-leucyl-tRNA(Leu) + AMP + diphosphate</text>
        <dbReference type="Rhea" id="RHEA:11688"/>
        <dbReference type="Rhea" id="RHEA-COMP:9613"/>
        <dbReference type="Rhea" id="RHEA-COMP:9622"/>
        <dbReference type="ChEBI" id="CHEBI:30616"/>
        <dbReference type="ChEBI" id="CHEBI:33019"/>
        <dbReference type="ChEBI" id="CHEBI:57427"/>
        <dbReference type="ChEBI" id="CHEBI:78442"/>
        <dbReference type="ChEBI" id="CHEBI:78494"/>
        <dbReference type="ChEBI" id="CHEBI:456215"/>
        <dbReference type="EC" id="6.1.1.4"/>
    </reaction>
</comment>
<comment type="subcellular location">
    <subcellularLocation>
        <location evidence="1">Cytoplasm</location>
    </subcellularLocation>
</comment>
<comment type="similarity">
    <text evidence="1">Belongs to the class-I aminoacyl-tRNA synthetase family.</text>
</comment>
<feature type="chain" id="PRO_1000009329" description="Leucine--tRNA ligase">
    <location>
        <begin position="1"/>
        <end position="816"/>
    </location>
</feature>
<feature type="short sequence motif" description="'HIGH' region">
    <location>
        <begin position="40"/>
        <end position="51"/>
    </location>
</feature>
<feature type="short sequence motif" description="'KMSKS' region">
    <location>
        <begin position="576"/>
        <end position="580"/>
    </location>
</feature>
<feature type="binding site" evidence="1">
    <location>
        <position position="579"/>
    </location>
    <ligand>
        <name>ATP</name>
        <dbReference type="ChEBI" id="CHEBI:30616"/>
    </ligand>
</feature>
<accession>Q0TTD0</accession>
<organism>
    <name type="scientific">Clostridium perfringens (strain ATCC 13124 / DSM 756 / JCM 1290 / NCIMB 6125 / NCTC 8237 / Type A)</name>
    <dbReference type="NCBI Taxonomy" id="195103"/>
    <lineage>
        <taxon>Bacteria</taxon>
        <taxon>Bacillati</taxon>
        <taxon>Bacillota</taxon>
        <taxon>Clostridia</taxon>
        <taxon>Eubacteriales</taxon>
        <taxon>Clostridiaceae</taxon>
        <taxon>Clostridium</taxon>
    </lineage>
</organism>
<evidence type="ECO:0000255" key="1">
    <source>
        <dbReference type="HAMAP-Rule" id="MF_00049"/>
    </source>
</evidence>
<reference key="1">
    <citation type="journal article" date="2006" name="Genome Res.">
        <title>Skewed genomic variability in strains of the toxigenic bacterial pathogen, Clostridium perfringens.</title>
        <authorList>
            <person name="Myers G.S.A."/>
            <person name="Rasko D.A."/>
            <person name="Cheung J.K."/>
            <person name="Ravel J."/>
            <person name="Seshadri R."/>
            <person name="DeBoy R.T."/>
            <person name="Ren Q."/>
            <person name="Varga J."/>
            <person name="Awad M.M."/>
            <person name="Brinkac L.M."/>
            <person name="Daugherty S.C."/>
            <person name="Haft D.H."/>
            <person name="Dodson R.J."/>
            <person name="Madupu R."/>
            <person name="Nelson W.C."/>
            <person name="Rosovitz M.J."/>
            <person name="Sullivan S.A."/>
            <person name="Khouri H."/>
            <person name="Dimitrov G.I."/>
            <person name="Watkins K.L."/>
            <person name="Mulligan S."/>
            <person name="Benton J."/>
            <person name="Radune D."/>
            <person name="Fisher D.J."/>
            <person name="Atkins H.S."/>
            <person name="Hiscox T."/>
            <person name="Jost B.H."/>
            <person name="Billington S.J."/>
            <person name="Songer J.G."/>
            <person name="McClane B.A."/>
            <person name="Titball R.W."/>
            <person name="Rood J.I."/>
            <person name="Melville S.B."/>
            <person name="Paulsen I.T."/>
        </authorList>
    </citation>
    <scope>NUCLEOTIDE SEQUENCE [LARGE SCALE GENOMIC DNA]</scope>
    <source>
        <strain>ATCC 13124 / DSM 756 / JCM 1290 / NCIMB 6125 / NCTC 8237 / S 107 / Type A</strain>
    </source>
</reference>
<dbReference type="EC" id="6.1.1.4" evidence="1"/>
<dbReference type="EMBL" id="CP000246">
    <property type="protein sequence ID" value="ABG83404.1"/>
    <property type="molecule type" value="Genomic_DNA"/>
</dbReference>
<dbReference type="RefSeq" id="WP_003457020.1">
    <property type="nucleotide sequence ID" value="NC_008261.1"/>
</dbReference>
<dbReference type="SMR" id="Q0TTD0"/>
<dbReference type="STRING" id="195103.CPF_0657"/>
<dbReference type="PaxDb" id="195103-CPF_0657"/>
<dbReference type="GeneID" id="93002995"/>
<dbReference type="KEGG" id="cpf:CPF_0657"/>
<dbReference type="eggNOG" id="COG0495">
    <property type="taxonomic scope" value="Bacteria"/>
</dbReference>
<dbReference type="HOGENOM" id="CLU_004427_0_0_9"/>
<dbReference type="Proteomes" id="UP000001823">
    <property type="component" value="Chromosome"/>
</dbReference>
<dbReference type="GO" id="GO:0005829">
    <property type="term" value="C:cytosol"/>
    <property type="evidence" value="ECO:0007669"/>
    <property type="project" value="TreeGrafter"/>
</dbReference>
<dbReference type="GO" id="GO:0002161">
    <property type="term" value="F:aminoacyl-tRNA deacylase activity"/>
    <property type="evidence" value="ECO:0007669"/>
    <property type="project" value="InterPro"/>
</dbReference>
<dbReference type="GO" id="GO:0005524">
    <property type="term" value="F:ATP binding"/>
    <property type="evidence" value="ECO:0007669"/>
    <property type="project" value="UniProtKB-UniRule"/>
</dbReference>
<dbReference type="GO" id="GO:0004823">
    <property type="term" value="F:leucine-tRNA ligase activity"/>
    <property type="evidence" value="ECO:0007669"/>
    <property type="project" value="UniProtKB-UniRule"/>
</dbReference>
<dbReference type="GO" id="GO:0006429">
    <property type="term" value="P:leucyl-tRNA aminoacylation"/>
    <property type="evidence" value="ECO:0007669"/>
    <property type="project" value="UniProtKB-UniRule"/>
</dbReference>
<dbReference type="CDD" id="cd07958">
    <property type="entry name" value="Anticodon_Ia_Leu_BEm"/>
    <property type="match status" value="1"/>
</dbReference>
<dbReference type="CDD" id="cd00812">
    <property type="entry name" value="LeuRS_core"/>
    <property type="match status" value="1"/>
</dbReference>
<dbReference type="FunFam" id="1.10.730.10:FF:000002">
    <property type="entry name" value="Leucine--tRNA ligase"/>
    <property type="match status" value="1"/>
</dbReference>
<dbReference type="FunFam" id="3.40.50.620:FF:000003">
    <property type="entry name" value="Leucine--tRNA ligase"/>
    <property type="match status" value="1"/>
</dbReference>
<dbReference type="FunFam" id="3.40.50.620:FF:000056">
    <property type="entry name" value="Leucine--tRNA ligase"/>
    <property type="match status" value="1"/>
</dbReference>
<dbReference type="Gene3D" id="3.10.20.590">
    <property type="match status" value="1"/>
</dbReference>
<dbReference type="Gene3D" id="3.40.50.620">
    <property type="entry name" value="HUPs"/>
    <property type="match status" value="2"/>
</dbReference>
<dbReference type="Gene3D" id="1.10.730.10">
    <property type="entry name" value="Isoleucyl-tRNA Synthetase, Domain 1"/>
    <property type="match status" value="1"/>
</dbReference>
<dbReference type="HAMAP" id="MF_00049_B">
    <property type="entry name" value="Leu_tRNA_synth_B"/>
    <property type="match status" value="1"/>
</dbReference>
<dbReference type="InterPro" id="IPR002300">
    <property type="entry name" value="aa-tRNA-synth_Ia"/>
</dbReference>
<dbReference type="InterPro" id="IPR002302">
    <property type="entry name" value="Leu-tRNA-ligase"/>
</dbReference>
<dbReference type="InterPro" id="IPR025709">
    <property type="entry name" value="Leu_tRNA-synth_edit"/>
</dbReference>
<dbReference type="InterPro" id="IPR013155">
    <property type="entry name" value="M/V/L/I-tRNA-synth_anticd-bd"/>
</dbReference>
<dbReference type="InterPro" id="IPR015413">
    <property type="entry name" value="Methionyl/Leucyl_tRNA_Synth"/>
</dbReference>
<dbReference type="InterPro" id="IPR014729">
    <property type="entry name" value="Rossmann-like_a/b/a_fold"/>
</dbReference>
<dbReference type="InterPro" id="IPR009080">
    <property type="entry name" value="tRNAsynth_Ia_anticodon-bd"/>
</dbReference>
<dbReference type="InterPro" id="IPR009008">
    <property type="entry name" value="Val/Leu/Ile-tRNA-synth_edit"/>
</dbReference>
<dbReference type="NCBIfam" id="TIGR00396">
    <property type="entry name" value="leuS_bact"/>
    <property type="match status" value="1"/>
</dbReference>
<dbReference type="PANTHER" id="PTHR43740:SF2">
    <property type="entry name" value="LEUCINE--TRNA LIGASE, MITOCHONDRIAL"/>
    <property type="match status" value="1"/>
</dbReference>
<dbReference type="PANTHER" id="PTHR43740">
    <property type="entry name" value="LEUCYL-TRNA SYNTHETASE"/>
    <property type="match status" value="1"/>
</dbReference>
<dbReference type="Pfam" id="PF08264">
    <property type="entry name" value="Anticodon_1"/>
    <property type="match status" value="1"/>
</dbReference>
<dbReference type="Pfam" id="PF00133">
    <property type="entry name" value="tRNA-synt_1"/>
    <property type="match status" value="1"/>
</dbReference>
<dbReference type="Pfam" id="PF13603">
    <property type="entry name" value="tRNA-synt_1_2"/>
    <property type="match status" value="1"/>
</dbReference>
<dbReference type="Pfam" id="PF09334">
    <property type="entry name" value="tRNA-synt_1g"/>
    <property type="match status" value="1"/>
</dbReference>
<dbReference type="PRINTS" id="PR00985">
    <property type="entry name" value="TRNASYNTHLEU"/>
</dbReference>
<dbReference type="SUPFAM" id="SSF47323">
    <property type="entry name" value="Anticodon-binding domain of a subclass of class I aminoacyl-tRNA synthetases"/>
    <property type="match status" value="1"/>
</dbReference>
<dbReference type="SUPFAM" id="SSF52374">
    <property type="entry name" value="Nucleotidylyl transferase"/>
    <property type="match status" value="1"/>
</dbReference>
<dbReference type="SUPFAM" id="SSF50677">
    <property type="entry name" value="ValRS/IleRS/LeuRS editing domain"/>
    <property type="match status" value="1"/>
</dbReference>